<sequence length="460" mass="50703">MTCQVTQKAREGTINPIFTCQPAGAQFASIGIKDCIGIVHGGQGCVMFVRLLISQHMKESFEIASSSVHEDGAVFGALDRVETAVEVLLTRYPDVKVVPIITTCSTEIIGDDVDGLLSKLEDELLPTKFPGREVHLLTVHCPSFVGSMITGYDKAVHDFVKKFATKDEPSDKINLITGWVNPGDVKELKHLLEVMEVKANVLFEVESFDSPLMPDLEHHSHGSTTIEDLRDTANAKGTIALNRYEGMKAADYLKKKFKVPAVIGPTPVGIRNTDAFLKAVSEMTGQPIPAQLVKERGLALDAIADIGHMFLADKRVAIYANPDLAIGLTEFCLDLEMKPKLLLLGDDNSGYVKDPRVVALQENAPDLEIVTNADFWDLESRIQQGLELDLILGHSKGRFISIDYKVPMVRVGFPTYDRAGMYRHPVLGYGGAMFLAETMANTLFADMEAKKNKEWILNVW</sequence>
<accession>Q07935</accession>
<gene>
    <name type="primary">anfK</name>
</gene>
<proteinExistence type="inferred from homology"/>
<comment type="function">
    <text>This iron-iron protein is part of the nitrogenase complex that catalyzes the key enzymatic reactions in nitrogen fixation. Other nitrogenase complexes utilize a molybdenum-iron protein or a vanadium-iron protein.</text>
</comment>
<comment type="catalytic activity">
    <reaction>
        <text>N2 + 8 reduced [2Fe-2S]-[ferredoxin] + 16 ATP + 16 H2O = H2 + 8 oxidized [2Fe-2S]-[ferredoxin] + 2 NH4(+) + 16 ADP + 16 phosphate + 6 H(+)</text>
        <dbReference type="Rhea" id="RHEA:21448"/>
        <dbReference type="Rhea" id="RHEA-COMP:10000"/>
        <dbReference type="Rhea" id="RHEA-COMP:10001"/>
        <dbReference type="ChEBI" id="CHEBI:15377"/>
        <dbReference type="ChEBI" id="CHEBI:15378"/>
        <dbReference type="ChEBI" id="CHEBI:17997"/>
        <dbReference type="ChEBI" id="CHEBI:18276"/>
        <dbReference type="ChEBI" id="CHEBI:28938"/>
        <dbReference type="ChEBI" id="CHEBI:30616"/>
        <dbReference type="ChEBI" id="CHEBI:33737"/>
        <dbReference type="ChEBI" id="CHEBI:33738"/>
        <dbReference type="ChEBI" id="CHEBI:43474"/>
        <dbReference type="ChEBI" id="CHEBI:456216"/>
        <dbReference type="EC" id="1.18.6.1"/>
    </reaction>
</comment>
<comment type="cofactor">
    <cofactor evidence="1">
        <name>[8Fe-7S] cluster</name>
        <dbReference type="ChEBI" id="CHEBI:21143"/>
    </cofactor>
    <text evidence="1">Binds 1 [8Fe-7S] cluster per heterodimer.</text>
</comment>
<comment type="subunit">
    <text>Hexamer of two alpha, two beta, and two delta chains.</text>
</comment>
<comment type="similarity">
    <text evidence="2">Belongs to the NifD/NifK/NifE/NifN family.</text>
</comment>
<organism>
    <name type="scientific">Rhodobacter capsulatus</name>
    <name type="common">Rhodopseudomonas capsulata</name>
    <dbReference type="NCBI Taxonomy" id="1061"/>
    <lineage>
        <taxon>Bacteria</taxon>
        <taxon>Pseudomonadati</taxon>
        <taxon>Pseudomonadota</taxon>
        <taxon>Alphaproteobacteria</taxon>
        <taxon>Rhodobacterales</taxon>
        <taxon>Rhodobacter group</taxon>
        <taxon>Rhodobacter</taxon>
    </lineage>
</organism>
<feature type="chain" id="PRO_0000153108" description="Nitrogenase iron-iron protein beta chain">
    <location>
        <begin position="1"/>
        <end position="460"/>
    </location>
</feature>
<feature type="binding site" evidence="1">
    <location>
        <position position="20"/>
    </location>
    <ligand>
        <name>[8Fe-7S] cluster</name>
        <dbReference type="ChEBI" id="CHEBI:21143"/>
        <note>ligand shared with alpha chain</note>
    </ligand>
</feature>
<feature type="binding site" evidence="1">
    <location>
        <position position="45"/>
    </location>
    <ligand>
        <name>[8Fe-7S] cluster</name>
        <dbReference type="ChEBI" id="CHEBI:21143"/>
        <note>ligand shared with alpha chain</note>
    </ligand>
</feature>
<feature type="binding site" evidence="1">
    <location>
        <position position="104"/>
    </location>
    <ligand>
        <name>[8Fe-7S] cluster</name>
        <dbReference type="ChEBI" id="CHEBI:21143"/>
        <note>ligand shared with alpha chain</note>
    </ligand>
</feature>
<feature type="binding site" evidence="1">
    <location>
        <position position="143"/>
    </location>
    <ligand>
        <name>[8Fe-7S] cluster</name>
        <dbReference type="ChEBI" id="CHEBI:21143"/>
        <note>ligand shared with alpha chain</note>
    </ligand>
</feature>
<name>ANFK_RHOCA</name>
<keyword id="KW-0067">ATP-binding</keyword>
<keyword id="KW-0408">Iron</keyword>
<keyword id="KW-0411">Iron-sulfur</keyword>
<keyword id="KW-0479">Metal-binding</keyword>
<keyword id="KW-0535">Nitrogen fixation</keyword>
<keyword id="KW-0547">Nucleotide-binding</keyword>
<keyword id="KW-0560">Oxidoreductase</keyword>
<evidence type="ECO:0000250" key="1"/>
<evidence type="ECO:0000305" key="2"/>
<reference key="1">
    <citation type="journal article" date="1993" name="Mol. Microbiol.">
        <title>Characterization of anf genes specific for the alternative nitrogenase and identification of nif genes required for both nitrogenases in Rhodobacter capsulatus.</title>
        <authorList>
            <person name="Schueddekopf K."/>
            <person name="Hennecke S."/>
            <person name="Liese U."/>
            <person name="Kutsche M."/>
            <person name="Klipp W."/>
        </authorList>
    </citation>
    <scope>NUCLEOTIDE SEQUENCE [GENOMIC DNA]</scope>
    <source>
        <strain>B10S</strain>
    </source>
</reference>
<protein>
    <recommendedName>
        <fullName>Nitrogenase iron-iron protein beta chain</fullName>
        <ecNumber>1.18.6.1</ecNumber>
    </recommendedName>
    <alternativeName>
        <fullName>Dinitrogenase 3 subunit beta</fullName>
    </alternativeName>
    <alternativeName>
        <fullName>Nitrogenase component I</fullName>
    </alternativeName>
</protein>
<dbReference type="EC" id="1.18.6.1"/>
<dbReference type="EMBL" id="X70033">
    <property type="protein sequence ID" value="CAA49627.1"/>
    <property type="molecule type" value="Genomic_DNA"/>
</dbReference>
<dbReference type="PIR" id="S34947">
    <property type="entry name" value="S34947"/>
</dbReference>
<dbReference type="SMR" id="Q07935"/>
<dbReference type="GO" id="GO:0005524">
    <property type="term" value="F:ATP binding"/>
    <property type="evidence" value="ECO:0007669"/>
    <property type="project" value="UniProtKB-KW"/>
</dbReference>
<dbReference type="GO" id="GO:0051536">
    <property type="term" value="F:iron-sulfur cluster binding"/>
    <property type="evidence" value="ECO:0007669"/>
    <property type="project" value="UniProtKB-KW"/>
</dbReference>
<dbReference type="GO" id="GO:0046872">
    <property type="term" value="F:metal ion binding"/>
    <property type="evidence" value="ECO:0007669"/>
    <property type="project" value="UniProtKB-KW"/>
</dbReference>
<dbReference type="GO" id="GO:0016163">
    <property type="term" value="F:nitrogenase activity"/>
    <property type="evidence" value="ECO:0007669"/>
    <property type="project" value="UniProtKB-EC"/>
</dbReference>
<dbReference type="GO" id="GO:0009399">
    <property type="term" value="P:nitrogen fixation"/>
    <property type="evidence" value="ECO:0007669"/>
    <property type="project" value="UniProtKB-KW"/>
</dbReference>
<dbReference type="Gene3D" id="3.40.50.1980">
    <property type="entry name" value="Nitrogenase molybdenum iron protein domain"/>
    <property type="match status" value="3"/>
</dbReference>
<dbReference type="Gene3D" id="1.20.89.10">
    <property type="entry name" value="Nitrogenase Molybdenum-iron Protein, subunit B, domain 4"/>
    <property type="match status" value="1"/>
</dbReference>
<dbReference type="InterPro" id="IPR050152">
    <property type="entry name" value="ChlB/BchB/BchZ"/>
</dbReference>
<dbReference type="InterPro" id="IPR000510">
    <property type="entry name" value="Nase/OxRdtase_comp1"/>
</dbReference>
<dbReference type="InterPro" id="IPR000318">
    <property type="entry name" value="Nase_comp1_CS"/>
</dbReference>
<dbReference type="InterPro" id="IPR014280">
    <property type="entry name" value="Nase_Fe-Fe_bsu"/>
</dbReference>
<dbReference type="NCBIfam" id="TIGR02931">
    <property type="entry name" value="anfK_nitrog"/>
    <property type="match status" value="1"/>
</dbReference>
<dbReference type="PANTHER" id="PTHR33712">
    <property type="entry name" value="LIGHT-INDEPENDENT PROTOCHLOROPHYLLIDE REDUCTASE SUBUNIT B"/>
    <property type="match status" value="1"/>
</dbReference>
<dbReference type="PANTHER" id="PTHR33712:SF7">
    <property type="entry name" value="LIGHT-INDEPENDENT PROTOCHLOROPHYLLIDE REDUCTASE SUBUNIT B"/>
    <property type="match status" value="1"/>
</dbReference>
<dbReference type="Pfam" id="PF00148">
    <property type="entry name" value="Oxidored_nitro"/>
    <property type="match status" value="1"/>
</dbReference>
<dbReference type="SUPFAM" id="SSF53807">
    <property type="entry name" value="Helical backbone' metal receptor"/>
    <property type="match status" value="1"/>
</dbReference>
<dbReference type="PROSITE" id="PS00699">
    <property type="entry name" value="NITROGENASE_1_1"/>
    <property type="match status" value="1"/>
</dbReference>
<dbReference type="PROSITE" id="PS00090">
    <property type="entry name" value="NITROGENASE_1_2"/>
    <property type="match status" value="1"/>
</dbReference>